<accession>Q9V0F5</accession>
<accession>G8ZH41</accession>
<sequence>MGDYIVVLEAPIIVKDVESVEEAIEAAVNKVMTALEKEKLDFVRVELGYSKCPVCGAHFESAFVVGNIGLVGIYLTLKVFNAQSLEHAERIAKAVVGKALKKVPLKLFEIRELHDGREENNGIEAGENETNA</sequence>
<organism>
    <name type="scientific">Pyrococcus abyssi (strain GE5 / Orsay)</name>
    <dbReference type="NCBI Taxonomy" id="272844"/>
    <lineage>
        <taxon>Archaea</taxon>
        <taxon>Methanobacteriati</taxon>
        <taxon>Methanobacteriota</taxon>
        <taxon>Thermococci</taxon>
        <taxon>Thermococcales</taxon>
        <taxon>Thermococcaceae</taxon>
        <taxon>Pyrococcus</taxon>
    </lineage>
</organism>
<feature type="chain" id="PRO_0000068280" description="UPF0212 protein PYRAB08340">
    <location>
        <begin position="1"/>
        <end position="132"/>
    </location>
</feature>
<reference key="1">
    <citation type="journal article" date="2003" name="Mol. Microbiol.">
        <title>An integrated analysis of the genome of the hyperthermophilic archaeon Pyrococcus abyssi.</title>
        <authorList>
            <person name="Cohen G.N."/>
            <person name="Barbe V."/>
            <person name="Flament D."/>
            <person name="Galperin M."/>
            <person name="Heilig R."/>
            <person name="Lecompte O."/>
            <person name="Poch O."/>
            <person name="Prieur D."/>
            <person name="Querellou J."/>
            <person name="Ripp R."/>
            <person name="Thierry J.-C."/>
            <person name="Van der Oost J."/>
            <person name="Weissenbach J."/>
            <person name="Zivanovic Y."/>
            <person name="Forterre P."/>
        </authorList>
    </citation>
    <scope>NUCLEOTIDE SEQUENCE [LARGE SCALE GENOMIC DNA]</scope>
    <source>
        <strain>GE5 / Orsay</strain>
    </source>
</reference>
<reference key="2">
    <citation type="journal article" date="2012" name="Curr. Microbiol.">
        <title>Re-annotation of two hyperthermophilic archaea Pyrococcus abyssi GE5 and Pyrococcus furiosus DSM 3638.</title>
        <authorList>
            <person name="Gao J."/>
            <person name="Wang J."/>
        </authorList>
    </citation>
    <scope>GENOME REANNOTATION</scope>
    <source>
        <strain>GE5 / Orsay</strain>
    </source>
</reference>
<gene>
    <name type="ordered locus">PYRAB08340</name>
    <name type="ORF">PAB1804</name>
</gene>
<proteinExistence type="inferred from homology"/>
<comment type="similarity">
    <text evidence="1">Belongs to the UPF0212 family.</text>
</comment>
<evidence type="ECO:0000255" key="1">
    <source>
        <dbReference type="HAMAP-Rule" id="MF_01223"/>
    </source>
</evidence>
<dbReference type="EMBL" id="AJ248285">
    <property type="protein sequence ID" value="CAB49748.1"/>
    <property type="molecule type" value="Genomic_DNA"/>
</dbReference>
<dbReference type="EMBL" id="HE613800">
    <property type="protein sequence ID" value="CCE70236.1"/>
    <property type="molecule type" value="Genomic_DNA"/>
</dbReference>
<dbReference type="PIR" id="C75129">
    <property type="entry name" value="C75129"/>
</dbReference>
<dbReference type="RefSeq" id="WP_010867956.1">
    <property type="nucleotide sequence ID" value="NC_000868.1"/>
</dbReference>
<dbReference type="STRING" id="272844.PAB1804"/>
<dbReference type="KEGG" id="pab:PAB1804"/>
<dbReference type="PATRIC" id="fig|272844.11.peg.880"/>
<dbReference type="eggNOG" id="arCOG02119">
    <property type="taxonomic scope" value="Archaea"/>
</dbReference>
<dbReference type="HOGENOM" id="CLU_138334_0_0_2"/>
<dbReference type="OrthoDB" id="63517at2157"/>
<dbReference type="PhylomeDB" id="Q9V0F5"/>
<dbReference type="Proteomes" id="UP000000810">
    <property type="component" value="Chromosome"/>
</dbReference>
<dbReference type="Proteomes" id="UP000009139">
    <property type="component" value="Chromosome"/>
</dbReference>
<dbReference type="HAMAP" id="MF_01223">
    <property type="entry name" value="UPF0212"/>
    <property type="match status" value="1"/>
</dbReference>
<dbReference type="InterPro" id="IPR007564">
    <property type="entry name" value="UPF0212"/>
</dbReference>
<dbReference type="NCBIfam" id="NF003035">
    <property type="entry name" value="PRK03922.1"/>
    <property type="match status" value="1"/>
</dbReference>
<dbReference type="PANTHER" id="PTHR42199">
    <property type="entry name" value="UPF0212 PROTEIN MJ0068"/>
    <property type="match status" value="1"/>
</dbReference>
<dbReference type="PANTHER" id="PTHR42199:SF1">
    <property type="entry name" value="UPF0212 PROTEIN TK1194"/>
    <property type="match status" value="1"/>
</dbReference>
<dbReference type="Pfam" id="PF04475">
    <property type="entry name" value="DUF555"/>
    <property type="match status" value="1"/>
</dbReference>
<dbReference type="PIRSF" id="PIRSF016934">
    <property type="entry name" value="UCP016934"/>
    <property type="match status" value="1"/>
</dbReference>
<name>Y834_PYRAB</name>
<protein>
    <recommendedName>
        <fullName evidence="1">UPF0212 protein PYRAB08340</fullName>
    </recommendedName>
</protein>